<comment type="function">
    <text evidence="5">Component of the chromatin structure remodeling complex (RSC), which is involved in transcription regulation and nucleosome positioning. Controls particularly membrane and organelle development genes.</text>
</comment>
<comment type="subunit">
    <text evidence="1">Component of the RSC complex composed of at least arp9, arp42, rsc1, rsc4, rsc7, rsc9, rsc58, sfh1, snf21, ssr1, ssr2, ssr3 and ssr4. The complex interacts with histone and histone variant components of centromeric chromatin (By similarity).</text>
</comment>
<comment type="subcellular location">
    <subcellularLocation>
        <location evidence="6">Nucleus</location>
    </subcellularLocation>
</comment>
<name>RSC4_SCHPO</name>
<reference key="1">
    <citation type="journal article" date="1995" name="Mol. Gen. Genet.">
        <title>A fission yeast gene mapping close to suc1 encodes a protein containing two bromodomains.</title>
        <authorList>
            <person name="Aves S.J."/>
            <person name="Hindley J."/>
            <person name="Phear G.A."/>
            <person name="Tongue N."/>
        </authorList>
    </citation>
    <scope>NUCLEOTIDE SEQUENCE [GENOMIC DNA]</scope>
</reference>
<reference key="2">
    <citation type="journal article" date="2002" name="Nature">
        <title>The genome sequence of Schizosaccharomyces pombe.</title>
        <authorList>
            <person name="Wood V."/>
            <person name="Gwilliam R."/>
            <person name="Rajandream M.A."/>
            <person name="Lyne M.H."/>
            <person name="Lyne R."/>
            <person name="Stewart A."/>
            <person name="Sgouros J.G."/>
            <person name="Peat N."/>
            <person name="Hayles J."/>
            <person name="Baker S.G."/>
            <person name="Basham D."/>
            <person name="Bowman S."/>
            <person name="Brooks K."/>
            <person name="Brown D."/>
            <person name="Brown S."/>
            <person name="Chillingworth T."/>
            <person name="Churcher C.M."/>
            <person name="Collins M."/>
            <person name="Connor R."/>
            <person name="Cronin A."/>
            <person name="Davis P."/>
            <person name="Feltwell T."/>
            <person name="Fraser A."/>
            <person name="Gentles S."/>
            <person name="Goble A."/>
            <person name="Hamlin N."/>
            <person name="Harris D.E."/>
            <person name="Hidalgo J."/>
            <person name="Hodgson G."/>
            <person name="Holroyd S."/>
            <person name="Hornsby T."/>
            <person name="Howarth S."/>
            <person name="Huckle E.J."/>
            <person name="Hunt S."/>
            <person name="Jagels K."/>
            <person name="James K.D."/>
            <person name="Jones L."/>
            <person name="Jones M."/>
            <person name="Leather S."/>
            <person name="McDonald S."/>
            <person name="McLean J."/>
            <person name="Mooney P."/>
            <person name="Moule S."/>
            <person name="Mungall K.L."/>
            <person name="Murphy L.D."/>
            <person name="Niblett D."/>
            <person name="Odell C."/>
            <person name="Oliver K."/>
            <person name="O'Neil S."/>
            <person name="Pearson D."/>
            <person name="Quail M.A."/>
            <person name="Rabbinowitsch E."/>
            <person name="Rutherford K.M."/>
            <person name="Rutter S."/>
            <person name="Saunders D."/>
            <person name="Seeger K."/>
            <person name="Sharp S."/>
            <person name="Skelton J."/>
            <person name="Simmonds M.N."/>
            <person name="Squares R."/>
            <person name="Squares S."/>
            <person name="Stevens K."/>
            <person name="Taylor K."/>
            <person name="Taylor R.G."/>
            <person name="Tivey A."/>
            <person name="Walsh S.V."/>
            <person name="Warren T."/>
            <person name="Whitehead S."/>
            <person name="Woodward J.R."/>
            <person name="Volckaert G."/>
            <person name="Aert R."/>
            <person name="Robben J."/>
            <person name="Grymonprez B."/>
            <person name="Weltjens I."/>
            <person name="Vanstreels E."/>
            <person name="Rieger M."/>
            <person name="Schaefer M."/>
            <person name="Mueller-Auer S."/>
            <person name="Gabel C."/>
            <person name="Fuchs M."/>
            <person name="Duesterhoeft A."/>
            <person name="Fritzc C."/>
            <person name="Holzer E."/>
            <person name="Moestl D."/>
            <person name="Hilbert H."/>
            <person name="Borzym K."/>
            <person name="Langer I."/>
            <person name="Beck A."/>
            <person name="Lehrach H."/>
            <person name="Reinhardt R."/>
            <person name="Pohl T.M."/>
            <person name="Eger P."/>
            <person name="Zimmermann W."/>
            <person name="Wedler H."/>
            <person name="Wambutt R."/>
            <person name="Purnelle B."/>
            <person name="Goffeau A."/>
            <person name="Cadieu E."/>
            <person name="Dreano S."/>
            <person name="Gloux S."/>
            <person name="Lelaure V."/>
            <person name="Mottier S."/>
            <person name="Galibert F."/>
            <person name="Aves S.J."/>
            <person name="Xiang Z."/>
            <person name="Hunt C."/>
            <person name="Moore K."/>
            <person name="Hurst S.M."/>
            <person name="Lucas M."/>
            <person name="Rochet M."/>
            <person name="Gaillardin C."/>
            <person name="Tallada V.A."/>
            <person name="Garzon A."/>
            <person name="Thode G."/>
            <person name="Daga R.R."/>
            <person name="Cruzado L."/>
            <person name="Jimenez J."/>
            <person name="Sanchez M."/>
            <person name="del Rey F."/>
            <person name="Benito J."/>
            <person name="Dominguez A."/>
            <person name="Revuelta J.L."/>
            <person name="Moreno S."/>
            <person name="Armstrong J."/>
            <person name="Forsburg S.L."/>
            <person name="Cerutti L."/>
            <person name="Lowe T."/>
            <person name="McCombie W.R."/>
            <person name="Paulsen I."/>
            <person name="Potashkin J."/>
            <person name="Shpakovski G.V."/>
            <person name="Ussery D."/>
            <person name="Barrell B.G."/>
            <person name="Nurse P."/>
        </authorList>
    </citation>
    <scope>NUCLEOTIDE SEQUENCE [LARGE SCALE GENOMIC DNA]</scope>
    <source>
        <strain>972 / ATCC 24843</strain>
    </source>
</reference>
<reference key="3">
    <citation type="journal article" date="2008" name="J. Proteome Res.">
        <title>Phosphoproteome analysis of fission yeast.</title>
        <authorList>
            <person name="Wilson-Grady J.T."/>
            <person name="Villen J."/>
            <person name="Gygi S.P."/>
        </authorList>
    </citation>
    <scope>PHOSPHORYLATION [LARGE SCALE ANALYSIS] AT SER-257; SER-271; SER-287 AND SER-313</scope>
    <scope>IDENTIFICATION BY MASS SPECTROMETRY</scope>
</reference>
<reference key="4">
    <citation type="journal article" date="2008" name="Nat. Struct. Mol. Biol.">
        <title>Fission yeast SWI/SNF and RSC complexes show compositional and functional differences from budding yeast.</title>
        <authorList>
            <person name="Monahan B.J."/>
            <person name="Villen J."/>
            <person name="Marguerat S."/>
            <person name="Baehler J."/>
            <person name="Gygi S.P."/>
            <person name="Winston F."/>
        </authorList>
    </citation>
    <scope>IDENTIFICATION IN THE RSC COMPLEX</scope>
    <scope>FUNCTION OF THE RSC COMPLEX</scope>
    <scope>IDENTIFICATION BY MASS SPECTROMETRY</scope>
</reference>
<accession>Q09948</accession>
<organism>
    <name type="scientific">Schizosaccharomyces pombe (strain 972 / ATCC 24843)</name>
    <name type="common">Fission yeast</name>
    <dbReference type="NCBI Taxonomy" id="284812"/>
    <lineage>
        <taxon>Eukaryota</taxon>
        <taxon>Fungi</taxon>
        <taxon>Dikarya</taxon>
        <taxon>Ascomycota</taxon>
        <taxon>Taphrinomycotina</taxon>
        <taxon>Schizosaccharomycetes</taxon>
        <taxon>Schizosaccharomycetales</taxon>
        <taxon>Schizosaccharomycetaceae</taxon>
        <taxon>Schizosaccharomyces</taxon>
    </lineage>
</organism>
<dbReference type="EMBL" id="X86764">
    <property type="protein sequence ID" value="CAA60444.1"/>
    <property type="molecule type" value="Genomic_DNA"/>
</dbReference>
<dbReference type="EMBL" id="CU329671">
    <property type="protein sequence ID" value="CAA21309.1"/>
    <property type="molecule type" value="Genomic_DNA"/>
</dbReference>
<dbReference type="PIR" id="S58680">
    <property type="entry name" value="S54260"/>
</dbReference>
<dbReference type="RefSeq" id="NP_595432.1">
    <property type="nucleotide sequence ID" value="NM_001021340.2"/>
</dbReference>
<dbReference type="SMR" id="Q09948"/>
<dbReference type="BioGRID" id="276543">
    <property type="interactions" value="137"/>
</dbReference>
<dbReference type="ComplexPortal" id="CPX-6363">
    <property type="entry name" value="RSC chromatin remodelling complex"/>
</dbReference>
<dbReference type="DIP" id="DIP-48391N"/>
<dbReference type="FunCoup" id="Q09948">
    <property type="interactions" value="269"/>
</dbReference>
<dbReference type="IntAct" id="Q09948">
    <property type="interactions" value="6"/>
</dbReference>
<dbReference type="STRING" id="284812.Q09948"/>
<dbReference type="iPTMnet" id="Q09948"/>
<dbReference type="PaxDb" id="4896-SPBC1734.15.1"/>
<dbReference type="EnsemblFungi" id="SPBC1734.15.1">
    <property type="protein sequence ID" value="SPBC1734.15.1:pep"/>
    <property type="gene ID" value="SPBC1734.15"/>
</dbReference>
<dbReference type="GeneID" id="2539999"/>
<dbReference type="KEGG" id="spo:2539999"/>
<dbReference type="PomBase" id="SPBC1734.15">
    <property type="gene designation" value="rsc4"/>
</dbReference>
<dbReference type="VEuPathDB" id="FungiDB:SPBC1734.15"/>
<dbReference type="eggNOG" id="KOG1827">
    <property type="taxonomic scope" value="Eukaryota"/>
</dbReference>
<dbReference type="HOGENOM" id="CLU_506375_0_0_1"/>
<dbReference type="InParanoid" id="Q09948"/>
<dbReference type="OMA" id="FVYECAL"/>
<dbReference type="Reactome" id="R-SPO-3214858">
    <property type="pathway name" value="RMTs methylate histone arginines"/>
</dbReference>
<dbReference type="PRO" id="PR:Q09948"/>
<dbReference type="Proteomes" id="UP000002485">
    <property type="component" value="Chromosome II"/>
</dbReference>
<dbReference type="GO" id="GO:0000785">
    <property type="term" value="C:chromatin"/>
    <property type="evidence" value="ECO:0000303"/>
    <property type="project" value="ComplexPortal"/>
</dbReference>
<dbReference type="GO" id="GO:0005829">
    <property type="term" value="C:cytosol"/>
    <property type="evidence" value="ECO:0007005"/>
    <property type="project" value="PomBase"/>
</dbReference>
<dbReference type="GO" id="GO:0005634">
    <property type="term" value="C:nucleus"/>
    <property type="evidence" value="ECO:0007005"/>
    <property type="project" value="PomBase"/>
</dbReference>
<dbReference type="GO" id="GO:0016586">
    <property type="term" value="C:RSC-type complex"/>
    <property type="evidence" value="ECO:0000314"/>
    <property type="project" value="PomBase"/>
</dbReference>
<dbReference type="GO" id="GO:0003682">
    <property type="term" value="F:chromatin binding"/>
    <property type="evidence" value="ECO:0000318"/>
    <property type="project" value="GO_Central"/>
</dbReference>
<dbReference type="GO" id="GO:0006338">
    <property type="term" value="P:chromatin remodeling"/>
    <property type="evidence" value="ECO:0000318"/>
    <property type="project" value="GO_Central"/>
</dbReference>
<dbReference type="GO" id="GO:0006368">
    <property type="term" value="P:transcription elongation by RNA polymerase II"/>
    <property type="evidence" value="ECO:0000318"/>
    <property type="project" value="GO_Central"/>
</dbReference>
<dbReference type="GO" id="GO:0045815">
    <property type="term" value="P:transcription initiation-coupled chromatin remodeling"/>
    <property type="evidence" value="ECO:0000305"/>
    <property type="project" value="PomBase"/>
</dbReference>
<dbReference type="CDD" id="cd04369">
    <property type="entry name" value="Bromodomain"/>
    <property type="match status" value="1"/>
</dbReference>
<dbReference type="FunFam" id="1.20.920.10:FF:000073">
    <property type="entry name" value="Chromatin structure-remodeling complex subunit rsc4"/>
    <property type="match status" value="1"/>
</dbReference>
<dbReference type="Gene3D" id="1.20.920.10">
    <property type="entry name" value="Bromodomain-like"/>
    <property type="match status" value="2"/>
</dbReference>
<dbReference type="InterPro" id="IPR001487">
    <property type="entry name" value="Bromodomain"/>
</dbReference>
<dbReference type="InterPro" id="IPR036427">
    <property type="entry name" value="Bromodomain-like_sf"/>
</dbReference>
<dbReference type="InterPro" id="IPR037382">
    <property type="entry name" value="Rsc/polybromo"/>
</dbReference>
<dbReference type="InterPro" id="IPR054551">
    <property type="entry name" value="RSC4_Ig-like"/>
</dbReference>
<dbReference type="PANTHER" id="PTHR16062:SF19">
    <property type="entry name" value="PROTEIN POLYBROMO-1"/>
    <property type="match status" value="1"/>
</dbReference>
<dbReference type="PANTHER" id="PTHR16062">
    <property type="entry name" value="SWI/SNF-RELATED"/>
    <property type="match status" value="1"/>
</dbReference>
<dbReference type="Pfam" id="PF00439">
    <property type="entry name" value="Bromodomain"/>
    <property type="match status" value="2"/>
</dbReference>
<dbReference type="Pfam" id="PF22994">
    <property type="entry name" value="RSC4_Ig_like"/>
    <property type="match status" value="1"/>
</dbReference>
<dbReference type="PRINTS" id="PR00503">
    <property type="entry name" value="BROMODOMAIN"/>
</dbReference>
<dbReference type="SMART" id="SM00297">
    <property type="entry name" value="BROMO"/>
    <property type="match status" value="2"/>
</dbReference>
<dbReference type="SUPFAM" id="SSF47370">
    <property type="entry name" value="Bromodomain"/>
    <property type="match status" value="2"/>
</dbReference>
<dbReference type="PROSITE" id="PS50014">
    <property type="entry name" value="BROMODOMAIN_2"/>
    <property type="match status" value="2"/>
</dbReference>
<sequence length="542" mass="60667">MVDDSHNAPFDKTKFDEVLEALVGLKDNEGNPFDDIFEELPSKRYFPDYYQIIQKPICYKMMRNKAKTGKYLSMGDFYDDIRLMVSNAQTYNMPGSLVYECSVLIANTANSLESKDGTLNEEENEEMESSINEEHKPGTNEIDVPKVIQNILDALHEEKDEQGRFLIDIFIDLPSKRLYPDYYEIIKSPMTIKMLEKRFKKGEYTTLESFVKDLNQMFINAKTYNAPGSFVYEDAEKLSQLSSSLISSFSEQPKEHSPATSKHEPEETPASPTPSVSASTSRERSTSVAPSFITSDQAATPDVLKSEEAHVESFSKESEKDQTPIPEDVPSPMDTLSQANYGAFALIKSFPSTPVPDFLNFSHKSVMGRSTFNMPNFPEPKFFEDIPNTERCILSAFICSPPQLPLPNPLRMYLPCPSLNSTEVSVITLAPQHSFLNIVINLNPALALKSYTIITLLNGKRLGAGVSTPPSTLYALEGIKHTEEPIRTVYEAKLSVGLNCLEFVLGSTEPVEPPSIEPGLPASAYSRTVERERFVLMAYVQP</sequence>
<protein>
    <recommendedName>
        <fullName>Chromatin structure-remodeling complex subunit rsc4</fullName>
    </recommendedName>
    <alternativeName>
        <fullName>Bromodomain-containing protein brd1</fullName>
    </alternativeName>
    <alternativeName>
        <fullName>RSC complex subunit rsc4</fullName>
    </alternativeName>
</protein>
<keyword id="KW-0103">Bromodomain</keyword>
<keyword id="KW-0156">Chromatin regulator</keyword>
<keyword id="KW-0539">Nucleus</keyword>
<keyword id="KW-0597">Phosphoprotein</keyword>
<keyword id="KW-1185">Reference proteome</keyword>
<keyword id="KW-0677">Repeat</keyword>
<keyword id="KW-0804">Transcription</keyword>
<keyword id="KW-0805">Transcription regulation</keyword>
<evidence type="ECO:0000250" key="1"/>
<evidence type="ECO:0000255" key="2">
    <source>
        <dbReference type="PROSITE-ProRule" id="PRU00035"/>
    </source>
</evidence>
<evidence type="ECO:0000256" key="3">
    <source>
        <dbReference type="SAM" id="MobiDB-lite"/>
    </source>
</evidence>
<evidence type="ECO:0000269" key="4">
    <source>
    </source>
</evidence>
<evidence type="ECO:0000269" key="5">
    <source>
    </source>
</evidence>
<evidence type="ECO:0000305" key="6"/>
<feature type="chain" id="PRO_0000211178" description="Chromatin structure-remodeling complex subunit rsc4">
    <location>
        <begin position="1"/>
        <end position="542"/>
    </location>
</feature>
<feature type="domain" description="Bromo 1" evidence="2">
    <location>
        <begin position="6"/>
        <end position="116"/>
    </location>
</feature>
<feature type="domain" description="Bromo 2" evidence="2">
    <location>
        <begin position="139"/>
        <end position="249"/>
    </location>
</feature>
<feature type="region of interest" description="Disordered" evidence="3">
    <location>
        <begin position="114"/>
        <end position="139"/>
    </location>
</feature>
<feature type="region of interest" description="Disordered" evidence="3">
    <location>
        <begin position="246"/>
        <end position="327"/>
    </location>
</feature>
<feature type="compositionally biased region" description="Acidic residues" evidence="3">
    <location>
        <begin position="119"/>
        <end position="128"/>
    </location>
</feature>
<feature type="compositionally biased region" description="Basic and acidic residues" evidence="3">
    <location>
        <begin position="252"/>
        <end position="266"/>
    </location>
</feature>
<feature type="compositionally biased region" description="Low complexity" evidence="3">
    <location>
        <begin position="268"/>
        <end position="280"/>
    </location>
</feature>
<feature type="compositionally biased region" description="Polar residues" evidence="3">
    <location>
        <begin position="286"/>
        <end position="298"/>
    </location>
</feature>
<feature type="compositionally biased region" description="Basic and acidic residues" evidence="3">
    <location>
        <begin position="304"/>
        <end position="322"/>
    </location>
</feature>
<feature type="modified residue" description="Phosphoserine" evidence="4">
    <location>
        <position position="257"/>
    </location>
</feature>
<feature type="modified residue" description="Phosphoserine" evidence="4">
    <location>
        <position position="271"/>
    </location>
</feature>
<feature type="modified residue" description="Phosphoserine" evidence="4">
    <location>
        <position position="287"/>
    </location>
</feature>
<feature type="modified residue" description="Phosphoserine" evidence="4">
    <location>
        <position position="313"/>
    </location>
</feature>
<proteinExistence type="evidence at protein level"/>
<gene>
    <name type="primary">rsc4</name>
    <name type="synonym">brd1</name>
    <name type="ORF">SPBC1734.15</name>
</gene>